<name>ACRB_ASPOR</name>
<proteinExistence type="inferred from homology"/>
<feature type="chain" id="PRO_0000395730" description="Probable ubiquitination network signaling protein acrB">
    <location>
        <begin position="1"/>
        <end position="1013"/>
    </location>
</feature>
<feature type="transmembrane region" description="Helical" evidence="2">
    <location>
        <begin position="158"/>
        <end position="178"/>
    </location>
</feature>
<feature type="transmembrane region" description="Helical" evidence="2">
    <location>
        <begin position="211"/>
        <end position="231"/>
    </location>
</feature>
<feature type="transmembrane region" description="Helical" evidence="2">
    <location>
        <begin position="254"/>
        <end position="274"/>
    </location>
</feature>
<feature type="region of interest" description="Disordered" evidence="3">
    <location>
        <begin position="1"/>
        <end position="65"/>
    </location>
</feature>
<feature type="region of interest" description="Disordered" evidence="3">
    <location>
        <begin position="105"/>
        <end position="137"/>
    </location>
</feature>
<feature type="region of interest" description="Disordered" evidence="3">
    <location>
        <begin position="339"/>
        <end position="367"/>
    </location>
</feature>
<feature type="region of interest" description="Disordered" evidence="3">
    <location>
        <begin position="875"/>
        <end position="902"/>
    </location>
</feature>
<feature type="region of interest" description="Disordered" evidence="3">
    <location>
        <begin position="953"/>
        <end position="1013"/>
    </location>
</feature>
<feature type="coiled-coil region" evidence="2">
    <location>
        <begin position="596"/>
        <end position="782"/>
    </location>
</feature>
<feature type="compositionally biased region" description="Polar residues" evidence="3">
    <location>
        <begin position="30"/>
        <end position="65"/>
    </location>
</feature>
<feature type="compositionally biased region" description="Polar residues" evidence="3">
    <location>
        <begin position="875"/>
        <end position="899"/>
    </location>
</feature>
<feature type="compositionally biased region" description="Basic and acidic residues" evidence="3">
    <location>
        <begin position="954"/>
        <end position="965"/>
    </location>
</feature>
<feature type="compositionally biased region" description="Gly residues" evidence="3">
    <location>
        <begin position="993"/>
        <end position="1002"/>
    </location>
</feature>
<feature type="compositionally biased region" description="Low complexity" evidence="3">
    <location>
        <begin position="1003"/>
        <end position="1013"/>
    </location>
</feature>
<accession>Q2UUI0</accession>
<sequence length="1013" mass="109286">MPRSSATARKSHSNRQENGAAGSGKKVNKQKSNGQLNGNANGSSAPISGPSSQVDWPSSRSNSDTAINSTVATATKANGTTECSKADGNGRGYLNGYVKGNPDMSYGQANGAVPQNGGLTGQASRRTESSKRSGSNTSINPLQLASTILKSCPMYDTIAILIFLLQLPPMVLTLVQFLFASLTFMPPGGASAGSLTSNFDIFQGPAGTPSLGTMIAMDGFFLLFWGLFMWTWAQNFALDLAHVQVAITLGGGGSGKNGGVNTLCVGIVLVLHLIRSKGIQDFVLGHLLSAKVISPDLLSQYSHLLPSEFRRTEPQSSPSWIRSLLAVHILAQAGTAMARRSMAKNRAPAPPRTGKRVDTEASAGSQTQIDSAFESGTSVSSYIGADGQLITPATHKDGRDRLISAKKRRRQANQVRNRQPFWAALASTKVTVMREYEHSRALSKTARGLTMTEEDLQGVSLDDGLVWITDVDSSSIKFAAGDLVSEDAGVSGSCESGRLGEDMEPFYVCVNGALWATVTICKVQDVAKGSSVVHWRGEISGLAPNCAYTCSFLRSDTEEEICVMSVKTPIANDAEQVVSSVSTPPQPSYRPSSPTTTLKNSIVNAELKLNEKRTRLRKAKNDHKLVVSKIRKELDNYNHRLHSGTDENRQKQRSLQLERNIKQTEEATAVLEVQLDNLENIPEEELEEWSAEKAKYEHELELFNSAKEDVATARSAAAREVSQLESDLTSTIQRRERLQGRRTRVNEQYERIISANAQGLNERERRAAEQFAREQDQAKVEANFNEQFASISQSVQEYQLRTNQLWQQCVAIEQALQQQQQQQILLDSAPLTPEGNLPGTNTLSEAPTLSLGALTTSASSNRSLLGLSFPPLKSSPLQHASSPIGPTSSRPTSPTQAPSYLQHFPASPLINTASPFESDFIHRDRSFSNRSGHSSLYGSDFFDSGRRPPFQFDLSEKVVDKRRSSGSESNAPNLGLRPICSPFPRAGSRASGSGSGGSGSGSGSPSSATGKGN</sequence>
<evidence type="ECO:0000250" key="1"/>
<evidence type="ECO:0000255" key="2"/>
<evidence type="ECO:0000256" key="3">
    <source>
        <dbReference type="SAM" id="MobiDB-lite"/>
    </source>
</evidence>
<evidence type="ECO:0000305" key="4"/>
<dbReference type="EMBL" id="BA000049">
    <property type="protein sequence ID" value="BAE54785.1"/>
    <property type="status" value="ALT_INIT"/>
    <property type="molecule type" value="Genomic_DNA"/>
</dbReference>
<dbReference type="SMR" id="Q2UUI0"/>
<dbReference type="STRING" id="510516.Q2UUI0"/>
<dbReference type="EnsemblFungi" id="BAE54785">
    <property type="protein sequence ID" value="BAE54785"/>
    <property type="gene ID" value="AO090009000307"/>
</dbReference>
<dbReference type="VEuPathDB" id="FungiDB:AO090009000307"/>
<dbReference type="Proteomes" id="UP000006564">
    <property type="component" value="Chromosome 1"/>
</dbReference>
<dbReference type="GO" id="GO:0016020">
    <property type="term" value="C:membrane"/>
    <property type="evidence" value="ECO:0007669"/>
    <property type="project" value="UniProtKB-SubCell"/>
</dbReference>
<dbReference type="PROSITE" id="PS00589">
    <property type="entry name" value="PTS_HPR_SER"/>
    <property type="match status" value="1"/>
</dbReference>
<protein>
    <recommendedName>
        <fullName>Probable ubiquitination network signaling protein acrB</fullName>
    </recommendedName>
    <alternativeName>
        <fullName>Acriflavine resistance protein B</fullName>
    </alternativeName>
</protein>
<keyword id="KW-0175">Coiled coil</keyword>
<keyword id="KW-0472">Membrane</keyword>
<keyword id="KW-1185">Reference proteome</keyword>
<keyword id="KW-0812">Transmembrane</keyword>
<keyword id="KW-1133">Transmembrane helix</keyword>
<keyword id="KW-0833">Ubl conjugation pathway</keyword>
<organism>
    <name type="scientific">Aspergillus oryzae (strain ATCC 42149 / RIB 40)</name>
    <name type="common">Yellow koji mold</name>
    <dbReference type="NCBI Taxonomy" id="510516"/>
    <lineage>
        <taxon>Eukaryota</taxon>
        <taxon>Fungi</taxon>
        <taxon>Dikarya</taxon>
        <taxon>Ascomycota</taxon>
        <taxon>Pezizomycotina</taxon>
        <taxon>Eurotiomycetes</taxon>
        <taxon>Eurotiomycetidae</taxon>
        <taxon>Eurotiales</taxon>
        <taxon>Aspergillaceae</taxon>
        <taxon>Aspergillus</taxon>
        <taxon>Aspergillus subgen. Circumdati</taxon>
    </lineage>
</organism>
<reference key="1">
    <citation type="journal article" date="2005" name="Nature">
        <title>Genome sequencing and analysis of Aspergillus oryzae.</title>
        <authorList>
            <person name="Machida M."/>
            <person name="Asai K."/>
            <person name="Sano M."/>
            <person name="Tanaka T."/>
            <person name="Kumagai T."/>
            <person name="Terai G."/>
            <person name="Kusumoto K."/>
            <person name="Arima T."/>
            <person name="Akita O."/>
            <person name="Kashiwagi Y."/>
            <person name="Abe K."/>
            <person name="Gomi K."/>
            <person name="Horiuchi H."/>
            <person name="Kitamoto K."/>
            <person name="Kobayashi T."/>
            <person name="Takeuchi M."/>
            <person name="Denning D.W."/>
            <person name="Galagan J.E."/>
            <person name="Nierman W.C."/>
            <person name="Yu J."/>
            <person name="Archer D.B."/>
            <person name="Bennett J.W."/>
            <person name="Bhatnagar D."/>
            <person name="Cleveland T.E."/>
            <person name="Fedorova N.D."/>
            <person name="Gotoh O."/>
            <person name="Horikawa H."/>
            <person name="Hosoyama A."/>
            <person name="Ichinomiya M."/>
            <person name="Igarashi R."/>
            <person name="Iwashita K."/>
            <person name="Juvvadi P.R."/>
            <person name="Kato M."/>
            <person name="Kato Y."/>
            <person name="Kin T."/>
            <person name="Kokubun A."/>
            <person name="Maeda H."/>
            <person name="Maeyama N."/>
            <person name="Maruyama J."/>
            <person name="Nagasaki H."/>
            <person name="Nakajima T."/>
            <person name="Oda K."/>
            <person name="Okada K."/>
            <person name="Paulsen I."/>
            <person name="Sakamoto K."/>
            <person name="Sawano T."/>
            <person name="Takahashi M."/>
            <person name="Takase K."/>
            <person name="Terabayashi Y."/>
            <person name="Wortman J.R."/>
            <person name="Yamada O."/>
            <person name="Yamagata Y."/>
            <person name="Anazawa H."/>
            <person name="Hata Y."/>
            <person name="Koide Y."/>
            <person name="Komori T."/>
            <person name="Koyama Y."/>
            <person name="Minetoki T."/>
            <person name="Suharnan S."/>
            <person name="Tanaka A."/>
            <person name="Isono K."/>
            <person name="Kuhara S."/>
            <person name="Ogasawara N."/>
            <person name="Kikuchi H."/>
        </authorList>
    </citation>
    <scope>NUCLEOTIDE SEQUENCE [LARGE SCALE GENOMIC DNA]</scope>
    <source>
        <strain>ATCC 42149 / RIB 40</strain>
    </source>
</reference>
<gene>
    <name type="primary">acrB</name>
    <name type="synonym">acr2</name>
    <name type="ORF">AO090009000307</name>
</gene>
<comment type="function">
    <text evidence="1">Component of the regulatory network controlling carbon source utilization through ubiquitination and deubiquitination involving creA, creB, creC, creD and acrB. Involved in resistance to acriflavine, and required for normal growth on a range of sole carbon sources, including fructose, cellobiose, raffinose, and starch, and reduced utilization of amino acids, including GABA and beta-alanine, as sole carbon and nitrogen sources (By similarity).</text>
</comment>
<comment type="subcellular location">
    <subcellularLocation>
        <location evidence="4">Membrane</location>
        <topology evidence="4">Multi-pass membrane protein</topology>
    </subcellularLocation>
</comment>
<comment type="similarity">
    <text evidence="4">Belongs to the acrB family.</text>
</comment>
<comment type="sequence caution" evidence="4">
    <conflict type="erroneous initiation">
        <sequence resource="EMBL-CDS" id="BAE54785"/>
    </conflict>
    <text>Truncated N-terminus.</text>
</comment>